<sequence length="147" mass="16587">MKVILKKDVKKLGKKGDVVSVSDGYARNYLIPRGLAEEATRGNITQLKEKEKIKEKKHQQKIEEARDMASKLEKEKFVIKVKSGENGRLFGSVTTKDIAETVKKAGYKIDKRKIDLDDNIKALGTYRVPVKIFEDVVATLKIQVVEA</sequence>
<dbReference type="EMBL" id="CP001098">
    <property type="protein sequence ID" value="ACL71077.1"/>
    <property type="molecule type" value="Genomic_DNA"/>
</dbReference>
<dbReference type="RefSeq" id="WP_015924045.1">
    <property type="nucleotide sequence ID" value="NC_011899.1"/>
</dbReference>
<dbReference type="SMR" id="B8D1C5"/>
<dbReference type="STRING" id="373903.Hore_23320"/>
<dbReference type="KEGG" id="hor:Hore_23320"/>
<dbReference type="eggNOG" id="COG0359">
    <property type="taxonomic scope" value="Bacteria"/>
</dbReference>
<dbReference type="HOGENOM" id="CLU_078938_3_0_9"/>
<dbReference type="OrthoDB" id="9788336at2"/>
<dbReference type="Proteomes" id="UP000000719">
    <property type="component" value="Chromosome"/>
</dbReference>
<dbReference type="GO" id="GO:1990904">
    <property type="term" value="C:ribonucleoprotein complex"/>
    <property type="evidence" value="ECO:0007669"/>
    <property type="project" value="UniProtKB-KW"/>
</dbReference>
<dbReference type="GO" id="GO:0005840">
    <property type="term" value="C:ribosome"/>
    <property type="evidence" value="ECO:0007669"/>
    <property type="project" value="UniProtKB-KW"/>
</dbReference>
<dbReference type="GO" id="GO:0019843">
    <property type="term" value="F:rRNA binding"/>
    <property type="evidence" value="ECO:0007669"/>
    <property type="project" value="UniProtKB-UniRule"/>
</dbReference>
<dbReference type="GO" id="GO:0003735">
    <property type="term" value="F:structural constituent of ribosome"/>
    <property type="evidence" value="ECO:0007669"/>
    <property type="project" value="InterPro"/>
</dbReference>
<dbReference type="GO" id="GO:0006412">
    <property type="term" value="P:translation"/>
    <property type="evidence" value="ECO:0007669"/>
    <property type="project" value="UniProtKB-UniRule"/>
</dbReference>
<dbReference type="FunFam" id="3.40.5.10:FF:000002">
    <property type="entry name" value="50S ribosomal protein L9"/>
    <property type="match status" value="1"/>
</dbReference>
<dbReference type="Gene3D" id="3.10.430.100">
    <property type="entry name" value="Ribosomal protein L9, C-terminal domain"/>
    <property type="match status" value="1"/>
</dbReference>
<dbReference type="Gene3D" id="3.40.5.10">
    <property type="entry name" value="Ribosomal protein L9, N-terminal domain"/>
    <property type="match status" value="1"/>
</dbReference>
<dbReference type="HAMAP" id="MF_00503">
    <property type="entry name" value="Ribosomal_bL9"/>
    <property type="match status" value="1"/>
</dbReference>
<dbReference type="InterPro" id="IPR000244">
    <property type="entry name" value="Ribosomal_bL9"/>
</dbReference>
<dbReference type="InterPro" id="IPR009027">
    <property type="entry name" value="Ribosomal_bL9/RNase_H1_N"/>
</dbReference>
<dbReference type="InterPro" id="IPR020594">
    <property type="entry name" value="Ribosomal_bL9_bac/chp"/>
</dbReference>
<dbReference type="InterPro" id="IPR020069">
    <property type="entry name" value="Ribosomal_bL9_C"/>
</dbReference>
<dbReference type="InterPro" id="IPR036791">
    <property type="entry name" value="Ribosomal_bL9_C_sf"/>
</dbReference>
<dbReference type="InterPro" id="IPR020070">
    <property type="entry name" value="Ribosomal_bL9_N"/>
</dbReference>
<dbReference type="InterPro" id="IPR036935">
    <property type="entry name" value="Ribosomal_bL9_N_sf"/>
</dbReference>
<dbReference type="NCBIfam" id="TIGR00158">
    <property type="entry name" value="L9"/>
    <property type="match status" value="1"/>
</dbReference>
<dbReference type="PANTHER" id="PTHR21368">
    <property type="entry name" value="50S RIBOSOMAL PROTEIN L9"/>
    <property type="match status" value="1"/>
</dbReference>
<dbReference type="Pfam" id="PF03948">
    <property type="entry name" value="Ribosomal_L9_C"/>
    <property type="match status" value="1"/>
</dbReference>
<dbReference type="Pfam" id="PF01281">
    <property type="entry name" value="Ribosomal_L9_N"/>
    <property type="match status" value="1"/>
</dbReference>
<dbReference type="SUPFAM" id="SSF55658">
    <property type="entry name" value="L9 N-domain-like"/>
    <property type="match status" value="1"/>
</dbReference>
<dbReference type="SUPFAM" id="SSF55653">
    <property type="entry name" value="Ribosomal protein L9 C-domain"/>
    <property type="match status" value="1"/>
</dbReference>
<dbReference type="PROSITE" id="PS00651">
    <property type="entry name" value="RIBOSOMAL_L9"/>
    <property type="match status" value="1"/>
</dbReference>
<reference key="1">
    <citation type="journal article" date="2009" name="PLoS ONE">
        <title>Genome analysis of the anaerobic thermohalophilic bacterium Halothermothrix orenii.</title>
        <authorList>
            <person name="Mavromatis K."/>
            <person name="Ivanova N."/>
            <person name="Anderson I."/>
            <person name="Lykidis A."/>
            <person name="Hooper S.D."/>
            <person name="Sun H."/>
            <person name="Kunin V."/>
            <person name="Lapidus A."/>
            <person name="Hugenholtz P."/>
            <person name="Patel B."/>
            <person name="Kyrpides N.C."/>
        </authorList>
    </citation>
    <scope>NUCLEOTIDE SEQUENCE [LARGE SCALE GENOMIC DNA]</scope>
    <source>
        <strain>H 168 / OCM 544 / DSM 9562</strain>
    </source>
</reference>
<keyword id="KW-1185">Reference proteome</keyword>
<keyword id="KW-0687">Ribonucleoprotein</keyword>
<keyword id="KW-0689">Ribosomal protein</keyword>
<keyword id="KW-0694">RNA-binding</keyword>
<keyword id="KW-0699">rRNA-binding</keyword>
<protein>
    <recommendedName>
        <fullName evidence="1">Large ribosomal subunit protein bL9</fullName>
    </recommendedName>
    <alternativeName>
        <fullName evidence="2">50S ribosomal protein L9</fullName>
    </alternativeName>
</protein>
<name>RL9_HALOH</name>
<evidence type="ECO:0000255" key="1">
    <source>
        <dbReference type="HAMAP-Rule" id="MF_00503"/>
    </source>
</evidence>
<evidence type="ECO:0000305" key="2"/>
<accession>B8D1C5</accession>
<feature type="chain" id="PRO_1000196248" description="Large ribosomal subunit protein bL9">
    <location>
        <begin position="1"/>
        <end position="147"/>
    </location>
</feature>
<organism>
    <name type="scientific">Halothermothrix orenii (strain H 168 / OCM 544 / DSM 9562)</name>
    <dbReference type="NCBI Taxonomy" id="373903"/>
    <lineage>
        <taxon>Bacteria</taxon>
        <taxon>Bacillati</taxon>
        <taxon>Bacillota</taxon>
        <taxon>Clostridia</taxon>
        <taxon>Halanaerobiales</taxon>
        <taxon>Halothermotrichaceae</taxon>
        <taxon>Halothermothrix</taxon>
    </lineage>
</organism>
<comment type="function">
    <text evidence="1">Binds to the 23S rRNA.</text>
</comment>
<comment type="similarity">
    <text evidence="1">Belongs to the bacterial ribosomal protein bL9 family.</text>
</comment>
<proteinExistence type="inferred from homology"/>
<gene>
    <name evidence="1" type="primary">rplI</name>
    <name type="ordered locus">Hore_23320</name>
</gene>